<evidence type="ECO:0000305" key="1"/>
<comment type="catalytic activity">
    <reaction>
        <text>DNA(n) + a 2'-deoxyribonucleoside 5'-triphosphate = DNA(n+1) + diphosphate</text>
        <dbReference type="Rhea" id="RHEA:22508"/>
        <dbReference type="Rhea" id="RHEA-COMP:17339"/>
        <dbReference type="Rhea" id="RHEA-COMP:17340"/>
        <dbReference type="ChEBI" id="CHEBI:33019"/>
        <dbReference type="ChEBI" id="CHEBI:61560"/>
        <dbReference type="ChEBI" id="CHEBI:173112"/>
        <dbReference type="EC" id="2.7.7.7"/>
    </reaction>
</comment>
<comment type="miscellaneous">
    <text>This DNA polymerase requires a protein as a primer.</text>
</comment>
<comment type="miscellaneous">
    <text>The presence of the two linear plasmids, termed pGKl-1 and pGKl-2, in strains of Kluyveromyces lactis confers the killer phenotype, i.e. production of toxin and resistance to it, to the host cell.</text>
</comment>
<comment type="similarity">
    <text evidence="1">Belongs to the DNA polymerase type-B family.</text>
</comment>
<comment type="sequence caution" evidence="1">
    <conflict type="erroneous initiation">
        <sequence resource="EMBL-CDS" id="CAA30136"/>
    </conflict>
</comment>
<proteinExistence type="inferred from homology"/>
<dbReference type="EC" id="2.7.7.7"/>
<dbReference type="EMBL" id="X07127">
    <property type="protein sequence ID" value="CAA30136.1"/>
    <property type="status" value="ALT_INIT"/>
    <property type="molecule type" value="Genomic_DNA"/>
</dbReference>
<dbReference type="EMBL" id="X01095">
    <property type="protein sequence ID" value="CAA25568.1"/>
    <property type="molecule type" value="Genomic_DNA"/>
</dbReference>
<dbReference type="EMBL" id="X00762">
    <property type="protein sequence ID" value="CAA25333.1"/>
    <property type="molecule type" value="Genomic_DNA"/>
</dbReference>
<dbReference type="PIR" id="S07353">
    <property type="entry name" value="S07353"/>
</dbReference>
<dbReference type="STRING" id="284590.P09804"/>
<dbReference type="PaxDb" id="284590-P09804"/>
<dbReference type="InParanoid" id="P09804"/>
<dbReference type="GO" id="GO:0003677">
    <property type="term" value="F:DNA binding"/>
    <property type="evidence" value="ECO:0007669"/>
    <property type="project" value="UniProtKB-KW"/>
</dbReference>
<dbReference type="GO" id="GO:0003887">
    <property type="term" value="F:DNA-directed DNA polymerase activity"/>
    <property type="evidence" value="ECO:0007669"/>
    <property type="project" value="UniProtKB-KW"/>
</dbReference>
<dbReference type="GO" id="GO:0000166">
    <property type="term" value="F:nucleotide binding"/>
    <property type="evidence" value="ECO:0007669"/>
    <property type="project" value="InterPro"/>
</dbReference>
<dbReference type="GO" id="GO:0006260">
    <property type="term" value="P:DNA replication"/>
    <property type="evidence" value="ECO:0007669"/>
    <property type="project" value="UniProtKB-KW"/>
</dbReference>
<dbReference type="Gene3D" id="4.10.80.20">
    <property type="entry name" value="DNA polymerase, domain 5"/>
    <property type="match status" value="1"/>
</dbReference>
<dbReference type="Gene3D" id="1.10.287.690">
    <property type="entry name" value="Helix hairpin bin"/>
    <property type="match status" value="1"/>
</dbReference>
<dbReference type="Gene3D" id="3.90.1600.10">
    <property type="entry name" value="Palm domain of DNA polymerase"/>
    <property type="match status" value="1"/>
</dbReference>
<dbReference type="Gene3D" id="3.30.1770.10">
    <property type="entry name" value="TPR 1 domain of DNA polymerase"/>
    <property type="match status" value="1"/>
</dbReference>
<dbReference type="InterPro" id="IPR006172">
    <property type="entry name" value="DNA-dir_DNA_pol_B"/>
</dbReference>
<dbReference type="InterPro" id="IPR017964">
    <property type="entry name" value="DNA-dir_DNA_pol_B_CS"/>
</dbReference>
<dbReference type="InterPro" id="IPR004868">
    <property type="entry name" value="DNA-dir_DNA_pol_B_mt/vir"/>
</dbReference>
<dbReference type="InterPro" id="IPR043502">
    <property type="entry name" value="DNA/RNA_pol_sf"/>
</dbReference>
<dbReference type="InterPro" id="IPR023211">
    <property type="entry name" value="DNA_pol_palm_dom_sf"/>
</dbReference>
<dbReference type="InterPro" id="IPR012337">
    <property type="entry name" value="RNaseH-like_sf"/>
</dbReference>
<dbReference type="PANTHER" id="PTHR33568">
    <property type="entry name" value="DNA POLYMERASE"/>
    <property type="match status" value="1"/>
</dbReference>
<dbReference type="PANTHER" id="PTHR33568:SF3">
    <property type="entry name" value="DNA-DIRECTED DNA POLYMERASE"/>
    <property type="match status" value="1"/>
</dbReference>
<dbReference type="Pfam" id="PF03175">
    <property type="entry name" value="DNA_pol_B_2"/>
    <property type="match status" value="1"/>
</dbReference>
<dbReference type="PRINTS" id="PR00106">
    <property type="entry name" value="DNAPOLB"/>
</dbReference>
<dbReference type="SMART" id="SM00486">
    <property type="entry name" value="POLBc"/>
    <property type="match status" value="1"/>
</dbReference>
<dbReference type="SUPFAM" id="SSF56672">
    <property type="entry name" value="DNA/RNA polymerases"/>
    <property type="match status" value="1"/>
</dbReference>
<dbReference type="SUPFAM" id="SSF53098">
    <property type="entry name" value="Ribonuclease H-like"/>
    <property type="match status" value="1"/>
</dbReference>
<dbReference type="PROSITE" id="PS00116">
    <property type="entry name" value="DNA_POLYMERASE_B"/>
    <property type="match status" value="1"/>
</dbReference>
<keyword id="KW-0235">DNA replication</keyword>
<keyword id="KW-0238">DNA-binding</keyword>
<keyword id="KW-0239">DNA-directed DNA polymerase</keyword>
<keyword id="KW-0548">Nucleotidyltransferase</keyword>
<keyword id="KW-0614">Plasmid</keyword>
<keyword id="KW-0808">Transferase</keyword>
<name>DPO1_KLULA</name>
<sequence>MNYIINLKMDYKDKALNDLRNVYADFDSLPLDFRQILIKDRATLLQKEDVEKKILERQEDAKKYAEYLKQSEIPERISLPNIKRHKGVSISFEETSEDMVLEPRPFIFDGLNIRCFRRETIFSLKNKILNMVKESSSFKNVSRQSVSFMYFKIFNKGKVIASTKSVNIYEDKIDERLEDLCNNFDDVLKKIIDVTYGYESLFVSETYSYVIFYAKSIYFPQPRCVNNWGNNIPNILTFDSFKLFTANKNNVSCIKQCSRFLWQKDFNTLEEMIEYKNGNICIVTPQLHINDVRDIKSFNDIRLYSESPIKTFSVIDNTITYLFYFKEHLGVIFNITKSRHDRRVTKFSPLSKFSDVKNITVCFDIESYFDPEKESNQVNIPFICCASIIYNKVIGNIVDFEGRDCVAQMIEYVVDICGELNISSVELIAHNGGGYDFHYILSSMYNPAAIKNILIRNNSFISFNFAHDGVKFSVKDSYSFLLCSLANASKAFLNEETFKKTDFPHHDLKTADDLYKVYKEWSSVNTEINHVVEKEKLLITSEHIVNFTKNDKSKTLIEWSKDYCRNDVLVLSKVWLEFKNAVEDIFNCELVDQTMTLAGLSYKLFQANMPFDVELRHPNKEDYFNMREALIGGRCISVNGIYKDVLCLDVKSLYPASMAFYDQPYGSFKRVSSRPKDELGIYYVRVTPNRNNKSNFFPIRSHNKITYNNFEESTYIAWYTNVDIDIGLSEGHNIEYIPFDSYGNIGYSWSKKGKIFEKYIKDVLYKLKIKYEKQNNKVKRNVIKIIMNSLWGKFAQKWVNFEYFIKSEDDIDFESEEAYKIWDTDFMLIKKIKESTYSSKPIQNGVFTLSWARYHMKSIWDAGAKEGAECIYSDTDSIFVHKEHFKKNAKFMLNGLKVPIIGSEVGQLELECEFDKLLCAGKKQYMGFYTYFQDGKPCIKEKKRFKGIPSNYIIPELYAHLLSGADKEAKIQFLKFRREWGSVKGYIENKTVKAT</sequence>
<geneLocation type="plasmid">
    <name>pGKl-1</name>
</geneLocation>
<reference key="1">
    <citation type="journal article" date="1985" name="Curr. Genet.">
        <title>Structure of a linear plasmid of the yeast Kluyveromyces lactis; compact organization of the killer genome.</title>
        <authorList>
            <person name="Sor F."/>
            <person name="Fukuhara H."/>
        </authorList>
    </citation>
    <scope>NUCLEOTIDE SEQUENCE [GENOMIC DNA]</scope>
    <source>
        <strain>ATCC 76492 / CBS 2359/152 / CLIB 210</strain>
    </source>
</reference>
<reference key="2">
    <citation type="journal article" date="1984" name="Nucleic Acids Res.">
        <title>Nucleotide sequence and transcription analysis of a linear DNA plasmid associated with the killer character of the yeast Kluyveromyces lactis.</title>
        <authorList>
            <person name="Stark M.J.R."/>
            <person name="Mileham A.J."/>
            <person name="Romanos M.A."/>
            <person name="Boyd A."/>
        </authorList>
    </citation>
    <scope>NUCLEOTIDE SEQUENCE [GENOMIC DNA]</scope>
    <source>
        <strain>ATCC 8585 / CBS 2359 / DSM 70799 / NBRC 1267 / NRRL Y-1140 / WM37</strain>
    </source>
</reference>
<reference key="3">
    <citation type="journal article" date="1988" name="Nucleic Acids Res.">
        <title>Resolution of sequence discrepancies in the ORF1 region of the Kluyveromyces lactis plasmid k1.</title>
        <authorList>
            <person name="Stark M.J.R."/>
        </authorList>
    </citation>
    <scope>NUCLEOTIDE SEQUENCE [GENOMIC DNA]</scope>
    <source>
        <strain>ATCC 52735 / 2105-1D</strain>
    </source>
</reference>
<reference key="4">
    <citation type="journal article" date="1984" name="Nucleic Acids Res.">
        <title>Cloning and nucleotide sequences of the linear DNA killer plasmids from yeast.</title>
        <authorList>
            <person name="Hishinuma F."/>
            <person name="Nakamura K."/>
            <person name="Hirai K."/>
            <person name="Nishizawa R."/>
            <person name="Gunge N."/>
            <person name="Maeda T."/>
        </authorList>
    </citation>
    <scope>NUCLEOTIDE SEQUENCE [GENOMIC DNA]</scope>
    <source>
        <strain>ATCC 52735 / 2105-1D</strain>
    </source>
</reference>
<reference key="5">
    <citation type="journal article" date="1987" name="Nucleic Acids Res.">
        <title>Yeast killer plasmid pGKL1 encodes a DNA polymerase belonging to the family B DNA polymerases.</title>
        <authorList>
            <person name="Jung G."/>
            <person name="Leavitt M.C."/>
            <person name="Ito J."/>
        </authorList>
    </citation>
    <scope>POSSIBLE IDENTIFICATION OF PROTEIN</scope>
</reference>
<protein>
    <recommendedName>
        <fullName>DNA polymerase</fullName>
        <ecNumber>2.7.7.7</ecNumber>
    </recommendedName>
</protein>
<feature type="chain" id="PRO_0000046548" description="DNA polymerase">
    <location>
        <begin position="1"/>
        <end position="995"/>
    </location>
</feature>
<feature type="sequence conflict" description="In Ref. 1; CAA30136." evidence="1" ref="1">
    <original>R</original>
    <variation>K</variation>
    <location>
        <position position="339"/>
    </location>
</feature>
<feature type="sequence conflict" description="In Ref. 1; CAA30136." evidence="1" ref="1">
    <original>P</original>
    <variation>S</variation>
    <location>
        <position position="504"/>
    </location>
</feature>
<gene>
    <name type="primary">RF1</name>
</gene>
<accession>P09804</accession>
<organism>
    <name type="scientific">Kluyveromyces lactis (strain ATCC 8585 / CBS 2359 / DSM 70799 / NBRC 1267 / NRRL Y-1140 / WM37)</name>
    <name type="common">Yeast</name>
    <name type="synonym">Candida sphaerica</name>
    <dbReference type="NCBI Taxonomy" id="284590"/>
    <lineage>
        <taxon>Eukaryota</taxon>
        <taxon>Fungi</taxon>
        <taxon>Dikarya</taxon>
        <taxon>Ascomycota</taxon>
        <taxon>Saccharomycotina</taxon>
        <taxon>Saccharomycetes</taxon>
        <taxon>Saccharomycetales</taxon>
        <taxon>Saccharomycetaceae</taxon>
        <taxon>Kluyveromyces</taxon>
    </lineage>
</organism>